<reference key="1">
    <citation type="submission" date="2007-08" db="EMBL/GenBank/DDBJ databases">
        <title>Complete sequence of Thermotoga lettingae TMO.</title>
        <authorList>
            <consortium name="US DOE Joint Genome Institute"/>
            <person name="Copeland A."/>
            <person name="Lucas S."/>
            <person name="Lapidus A."/>
            <person name="Barry K."/>
            <person name="Glavina del Rio T."/>
            <person name="Dalin E."/>
            <person name="Tice H."/>
            <person name="Pitluck S."/>
            <person name="Foster B."/>
            <person name="Bruce D."/>
            <person name="Schmutz J."/>
            <person name="Larimer F."/>
            <person name="Land M."/>
            <person name="Hauser L."/>
            <person name="Kyrpides N."/>
            <person name="Mikhailova N."/>
            <person name="Nelson K."/>
            <person name="Gogarten J.P."/>
            <person name="Noll K."/>
            <person name="Richardson P."/>
        </authorList>
    </citation>
    <scope>NUCLEOTIDE SEQUENCE [LARGE SCALE GENOMIC DNA]</scope>
    <source>
        <strain>ATCC BAA-301 / DSM 14385 / NBRC 107922 / TMO</strain>
    </source>
</reference>
<accession>A8F5M9</accession>
<evidence type="ECO:0000255" key="1">
    <source>
        <dbReference type="HAMAP-Rule" id="MF_00052"/>
    </source>
</evidence>
<evidence type="ECO:0000255" key="2">
    <source>
        <dbReference type="PROSITE-ProRule" id="PRU01319"/>
    </source>
</evidence>
<name>RNH2_PSELT</name>
<dbReference type="EC" id="3.1.26.4" evidence="1"/>
<dbReference type="EMBL" id="CP000812">
    <property type="protein sequence ID" value="ABV33463.1"/>
    <property type="molecule type" value="Genomic_DNA"/>
</dbReference>
<dbReference type="RefSeq" id="WP_012002944.1">
    <property type="nucleotide sequence ID" value="NZ_BSDV01000001.1"/>
</dbReference>
<dbReference type="SMR" id="A8F5M9"/>
<dbReference type="STRING" id="416591.Tlet_0897"/>
<dbReference type="KEGG" id="tle:Tlet_0897"/>
<dbReference type="eggNOG" id="COG0164">
    <property type="taxonomic scope" value="Bacteria"/>
</dbReference>
<dbReference type="HOGENOM" id="CLU_036532_3_2_0"/>
<dbReference type="OrthoDB" id="9803420at2"/>
<dbReference type="Proteomes" id="UP000002016">
    <property type="component" value="Chromosome"/>
</dbReference>
<dbReference type="GO" id="GO:0005737">
    <property type="term" value="C:cytoplasm"/>
    <property type="evidence" value="ECO:0007669"/>
    <property type="project" value="UniProtKB-SubCell"/>
</dbReference>
<dbReference type="GO" id="GO:0032299">
    <property type="term" value="C:ribonuclease H2 complex"/>
    <property type="evidence" value="ECO:0007669"/>
    <property type="project" value="TreeGrafter"/>
</dbReference>
<dbReference type="GO" id="GO:0030145">
    <property type="term" value="F:manganese ion binding"/>
    <property type="evidence" value="ECO:0007669"/>
    <property type="project" value="UniProtKB-UniRule"/>
</dbReference>
<dbReference type="GO" id="GO:0003723">
    <property type="term" value="F:RNA binding"/>
    <property type="evidence" value="ECO:0007669"/>
    <property type="project" value="InterPro"/>
</dbReference>
<dbReference type="GO" id="GO:0004523">
    <property type="term" value="F:RNA-DNA hybrid ribonuclease activity"/>
    <property type="evidence" value="ECO:0007669"/>
    <property type="project" value="UniProtKB-UniRule"/>
</dbReference>
<dbReference type="GO" id="GO:0043137">
    <property type="term" value="P:DNA replication, removal of RNA primer"/>
    <property type="evidence" value="ECO:0007669"/>
    <property type="project" value="TreeGrafter"/>
</dbReference>
<dbReference type="GO" id="GO:0006298">
    <property type="term" value="P:mismatch repair"/>
    <property type="evidence" value="ECO:0007669"/>
    <property type="project" value="TreeGrafter"/>
</dbReference>
<dbReference type="CDD" id="cd07182">
    <property type="entry name" value="RNase_HII_bacteria_HII_like"/>
    <property type="match status" value="1"/>
</dbReference>
<dbReference type="Gene3D" id="3.30.420.10">
    <property type="entry name" value="Ribonuclease H-like superfamily/Ribonuclease H"/>
    <property type="match status" value="1"/>
</dbReference>
<dbReference type="HAMAP" id="MF_00052_B">
    <property type="entry name" value="RNase_HII_B"/>
    <property type="match status" value="1"/>
</dbReference>
<dbReference type="InterPro" id="IPR022898">
    <property type="entry name" value="RNase_HII"/>
</dbReference>
<dbReference type="InterPro" id="IPR001352">
    <property type="entry name" value="RNase_HII/HIII"/>
</dbReference>
<dbReference type="InterPro" id="IPR024567">
    <property type="entry name" value="RNase_HII/HIII_dom"/>
</dbReference>
<dbReference type="InterPro" id="IPR012337">
    <property type="entry name" value="RNaseH-like_sf"/>
</dbReference>
<dbReference type="InterPro" id="IPR036397">
    <property type="entry name" value="RNaseH_sf"/>
</dbReference>
<dbReference type="NCBIfam" id="NF000595">
    <property type="entry name" value="PRK00015.1-3"/>
    <property type="match status" value="1"/>
</dbReference>
<dbReference type="PANTHER" id="PTHR10954">
    <property type="entry name" value="RIBONUCLEASE H2 SUBUNIT A"/>
    <property type="match status" value="1"/>
</dbReference>
<dbReference type="PANTHER" id="PTHR10954:SF18">
    <property type="entry name" value="RIBONUCLEASE HII"/>
    <property type="match status" value="1"/>
</dbReference>
<dbReference type="Pfam" id="PF01351">
    <property type="entry name" value="RNase_HII"/>
    <property type="match status" value="1"/>
</dbReference>
<dbReference type="SUPFAM" id="SSF53098">
    <property type="entry name" value="Ribonuclease H-like"/>
    <property type="match status" value="1"/>
</dbReference>
<dbReference type="PROSITE" id="PS51975">
    <property type="entry name" value="RNASE_H_2"/>
    <property type="match status" value="1"/>
</dbReference>
<gene>
    <name evidence="1" type="primary">rnhB</name>
    <name type="ordered locus">Tlet_0897</name>
</gene>
<sequence>MRSELFAYDRFYKQNFGTVIGVDEAGRGCLAGPVVAAAVILEVQLDVFDSKQLTAQKREELFLQIMNSAEVGIGIATPEEIDLYNIFNATKIAMNRALASLNKKDAYVLVDGKSLNLSQQGVCIVKGDEKSASIAAASIVAKVLRDRIMVAHDRIYPCYGFSKHKGYGTVHHLNAIREFGPTVFHRLSFSPVLSNLSVKKVHDLFSENINCERAKVILRKLSSS</sequence>
<keyword id="KW-0963">Cytoplasm</keyword>
<keyword id="KW-0255">Endonuclease</keyword>
<keyword id="KW-0378">Hydrolase</keyword>
<keyword id="KW-0464">Manganese</keyword>
<keyword id="KW-0479">Metal-binding</keyword>
<keyword id="KW-0540">Nuclease</keyword>
<keyword id="KW-1185">Reference proteome</keyword>
<proteinExistence type="inferred from homology"/>
<organism>
    <name type="scientific">Pseudothermotoga lettingae (strain ATCC BAA-301 / DSM 14385 / NBRC 107922 / TMO)</name>
    <name type="common">Thermotoga lettingae</name>
    <dbReference type="NCBI Taxonomy" id="416591"/>
    <lineage>
        <taxon>Bacteria</taxon>
        <taxon>Thermotogati</taxon>
        <taxon>Thermotogota</taxon>
        <taxon>Thermotogae</taxon>
        <taxon>Thermotogales</taxon>
        <taxon>Thermotogaceae</taxon>
        <taxon>Pseudothermotoga</taxon>
    </lineage>
</organism>
<protein>
    <recommendedName>
        <fullName evidence="1">Ribonuclease HII</fullName>
        <shortName evidence="1">RNase HII</shortName>
        <ecNumber evidence="1">3.1.26.4</ecNumber>
    </recommendedName>
</protein>
<comment type="function">
    <text evidence="1">Endonuclease that specifically degrades the RNA of RNA-DNA hybrids.</text>
</comment>
<comment type="catalytic activity">
    <reaction evidence="1">
        <text>Endonucleolytic cleavage to 5'-phosphomonoester.</text>
        <dbReference type="EC" id="3.1.26.4"/>
    </reaction>
</comment>
<comment type="cofactor">
    <cofactor evidence="1">
        <name>Mn(2+)</name>
        <dbReference type="ChEBI" id="CHEBI:29035"/>
    </cofactor>
    <cofactor evidence="1">
        <name>Mg(2+)</name>
        <dbReference type="ChEBI" id="CHEBI:18420"/>
    </cofactor>
    <text evidence="1">Manganese or magnesium. Binds 1 divalent metal ion per monomer in the absence of substrate. May bind a second metal ion after substrate binding.</text>
</comment>
<comment type="subcellular location">
    <subcellularLocation>
        <location evidence="1">Cytoplasm</location>
    </subcellularLocation>
</comment>
<comment type="similarity">
    <text evidence="1">Belongs to the RNase HII family.</text>
</comment>
<feature type="chain" id="PRO_0000334969" description="Ribonuclease HII">
    <location>
        <begin position="1"/>
        <end position="224"/>
    </location>
</feature>
<feature type="domain" description="RNase H type-2" evidence="2">
    <location>
        <begin position="17"/>
        <end position="201"/>
    </location>
</feature>
<feature type="binding site" evidence="1">
    <location>
        <position position="23"/>
    </location>
    <ligand>
        <name>a divalent metal cation</name>
        <dbReference type="ChEBI" id="CHEBI:60240"/>
    </ligand>
</feature>
<feature type="binding site" evidence="1">
    <location>
        <position position="24"/>
    </location>
    <ligand>
        <name>a divalent metal cation</name>
        <dbReference type="ChEBI" id="CHEBI:60240"/>
    </ligand>
</feature>
<feature type="binding site" evidence="1">
    <location>
        <position position="111"/>
    </location>
    <ligand>
        <name>a divalent metal cation</name>
        <dbReference type="ChEBI" id="CHEBI:60240"/>
    </ligand>
</feature>